<reference key="1">
    <citation type="journal article" date="1991" name="Plant Cell">
        <title>Analysis of maize brittle-1 alleles and a defective Suppressor-mutator-induced mutable allele.</title>
        <authorList>
            <person name="Sullivan T.D."/>
            <person name="Strelow L.I."/>
            <person name="Illingworth C.A."/>
            <person name="Phillips R.L."/>
            <person name="Nelson O.E. Jr."/>
        </authorList>
    </citation>
    <scope>NUCLEOTIDE SEQUENCE [MRNA]</scope>
    <scope>DISRUPTION PHENOTYPE</scope>
</reference>
<reference key="2">
    <citation type="journal article" date="1998" name="Plant Physiol.">
        <title>Brittle-1, an adenylate translocator, facilitates transfer of extraplastidial synthesized ADP-glucose into amyloplasts of maize endosperms.</title>
        <authorList>
            <person name="Shannon J.C."/>
            <person name="Pien F.M."/>
            <person name="Cao H."/>
            <person name="Liu K.C."/>
        </authorList>
    </citation>
    <scope>FUNCTION</scope>
</reference>
<reference key="3">
    <citation type="journal article" date="2007" name="J. Biol. Chem.">
        <title>Molecular and biochemical analysis of the plastidic ADP-glucose transporter (ZmBT1) from Zea mays.</title>
        <authorList>
            <person name="Kirchberger S."/>
            <person name="Leroch M."/>
            <person name="Huynen M.A."/>
            <person name="Wahl M."/>
            <person name="Neuhaus H.E."/>
            <person name="Tjaden J."/>
        </authorList>
    </citation>
    <scope>FUNCTION</scope>
    <scope>ACTIVITY REGULATION</scope>
    <scope>BIOPHYSICOCHEMICAL PROPERTIES</scope>
    <scope>TISSUE SPECIFICITY</scope>
</reference>
<reference key="4">
    <citation type="journal article" date="2011" name="Plant Cell Physiol.">
        <title>Dual targeting to mitochondria and plastids of AtBT1 and ZmBT1, two members of the mitochondrial carrier family.</title>
        <authorList>
            <person name="Bahaji A."/>
            <person name="Ovecka M."/>
            <person name="Barany I."/>
            <person name="Risueno M.C."/>
            <person name="Munoz F.J."/>
            <person name="Baroja-Fernandez E."/>
            <person name="Montero M."/>
            <person name="Li J."/>
            <person name="Hidalgo M."/>
            <person name="Sesma M.T."/>
            <person name="Ezquer I."/>
            <person name="Testillano P.S."/>
            <person name="Pozueta-Romero J."/>
        </authorList>
    </citation>
    <scope>SUBCELLULAR LOCATION</scope>
</reference>
<proteinExistence type="evidence at protein level"/>
<comment type="function">
    <text evidence="4 6">Probable adenylate translocator that mediates transport of ADP-glucose into endosperm storage plastids during starch synthesis. Transports cytosolic ADP-glucose to amyloplast stroma by counter-exchange with ADP.</text>
</comment>
<comment type="activity regulation">
    <text evidence="4">Inhibited by mersalyl.</text>
</comment>
<comment type="biophysicochemical properties">
    <kinetics>
        <KM evidence="4">848 uM for ADP-glucose (for the recombinant protein in intact E.coli cells)</KM>
        <KM evidence="4">465 uM for ADP (for the recombinant protein in intact E.coli cells)</KM>
        <Vmax evidence="4">191.0 nmol/h/mg enzyme toward ADP-glucose (for the recombinant protein in intact E.coli cells)</Vmax>
        <Vmax evidence="4">6.1 nmol/h/mg enzyme toward ADP (for the recombinant protein in intact E.coli cells)</Vmax>
    </kinetics>
</comment>
<comment type="subcellular location">
    <subcellularLocation>
        <location evidence="8">Plastid</location>
        <location evidence="8">Chloroplast inner membrane</location>
        <topology evidence="8">Multi-pass membrane protein</topology>
    </subcellularLocation>
    <subcellularLocation>
        <location evidence="8">Plastid</location>
        <location evidence="8">Amyloplast inner membrane</location>
        <topology evidence="8">Multi-pass membrane protein</topology>
    </subcellularLocation>
    <subcellularLocation>
        <location evidence="8">Mitochondrion inner membrane</location>
        <topology evidence="8">Multi-pass membrane protein</topology>
    </subcellularLocation>
    <text evidence="5">Dually targeted to mitochondria and plastids. The N-terminal extension acts as a plastidic transit peptide. Dual localization of BT1 does not seem to be due to alternative transcription start sites, translation initiation sites or alternative exon splicing (PubMed:21330298).</text>
</comment>
<comment type="tissue specificity">
    <text evidence="4">Highly expressed in silks and endosperm of developing kernels. Expressed at intermediate levels in tassels and lower levels in stems and leaves.</text>
</comment>
<comment type="disruption phenotype">
    <text evidence="3">Severely reduced starch content of endosperm resulting in kernels with a collapsed angular appearance at maturity.</text>
</comment>
<comment type="similarity">
    <text evidence="7">Belongs to the mitochondrial carrier (TC 2.A.29) family.</text>
</comment>
<feature type="transit peptide" description="Chloroplast and mitochondrion" evidence="1">
    <location>
        <begin position="1"/>
        <end status="unknown"/>
    </location>
</feature>
<feature type="chain" id="PRO_0000019267" description="Adenine nucleotide transporter BT1, chloroplastic/amyloplastic/mitochondrial">
    <location>
        <begin status="unknown"/>
        <end position="436"/>
    </location>
</feature>
<feature type="transmembrane region" description="Helical; Name=1" evidence="1">
    <location>
        <begin position="137"/>
        <end position="158"/>
    </location>
</feature>
<feature type="transmembrane region" description="Helical; Name=2" evidence="1">
    <location>
        <begin position="193"/>
        <end position="213"/>
    </location>
</feature>
<feature type="transmembrane region" description="Helical; Name=3" evidence="1">
    <location>
        <begin position="229"/>
        <end position="247"/>
    </location>
</feature>
<feature type="transmembrane region" description="Helical; Name=4" evidence="1">
    <location>
        <begin position="290"/>
        <end position="310"/>
    </location>
</feature>
<feature type="transmembrane region" description="Helical; Name=5" evidence="1">
    <location>
        <begin position="327"/>
        <end position="347"/>
    </location>
</feature>
<feature type="transmembrane region" description="Helical; Name=6" evidence="1">
    <location>
        <begin position="384"/>
        <end position="405"/>
    </location>
</feature>
<feature type="repeat" description="Solcar 1">
    <location>
        <begin position="132"/>
        <end position="216"/>
    </location>
</feature>
<feature type="repeat" description="Solcar 2">
    <location>
        <begin position="227"/>
        <end position="311"/>
    </location>
</feature>
<feature type="repeat" description="Solcar 3">
    <location>
        <begin position="324"/>
        <end position="412"/>
    </location>
</feature>
<feature type="region of interest" description="Disordered" evidence="2">
    <location>
        <begin position="83"/>
        <end position="135"/>
    </location>
</feature>
<feature type="region of interest" description="Disordered" evidence="2">
    <location>
        <begin position="417"/>
        <end position="436"/>
    </location>
</feature>
<feature type="compositionally biased region" description="Acidic residues" evidence="2">
    <location>
        <begin position="417"/>
        <end position="428"/>
    </location>
</feature>
<accession>P29518</accession>
<name>BT1_MAIZE</name>
<sequence>MAATMAVTTMVTRSKESWSSLQVPAVAFPWKPRGGKTGGLEFPRRAMFASVGLNVCPGVPAGRDPREPDPKVVRAADNCDIAASLAPPFPGSRPPGRRGRGSEEEEAEGRRHEEAAAAGRSEPEEGQGQDRQPAPARLVSGAIAGAVSRTFVAPLETIRTHLMVGSIGVDSMAGVFQWIMQNEGWTGLFRGNAVNVLRVAPSKAIEHFTYDTAKKFLTPKGDEPPKIPIPTPLVAGALAGFASTLCTYPMELIKTRVTIEKDVYDNVAHAFVKILRDEGPSELYRGLTPSLIGVVPYAACNFYAYETLKRLYRRATGRRPGADVGPVATLLIGSAAGAIASSATFPLEVARKQMQVGAVGGRQVYQNVLHAIYCILKKEGAGGLYRGLGPSCIKLMPAAGIAFMCYEACKKILVDKEDEEEEDEAGGGEDDKKKVE</sequence>
<protein>
    <recommendedName>
        <fullName>Adenine nucleotide transporter BT1, chloroplastic/amyloplastic/mitochondrial</fullName>
    </recommendedName>
    <alternativeName>
        <fullName>Protein brittle-1</fullName>
    </alternativeName>
</protein>
<keyword id="KW-0035">Amyloplast</keyword>
<keyword id="KW-0150">Chloroplast</keyword>
<keyword id="KW-0472">Membrane</keyword>
<keyword id="KW-0496">Mitochondrion</keyword>
<keyword id="KW-0999">Mitochondrion inner membrane</keyword>
<keyword id="KW-0934">Plastid</keyword>
<keyword id="KW-1001">Plastid inner membrane</keyword>
<keyword id="KW-1185">Reference proteome</keyword>
<keyword id="KW-0677">Repeat</keyword>
<keyword id="KW-0809">Transit peptide</keyword>
<keyword id="KW-0812">Transmembrane</keyword>
<keyword id="KW-1133">Transmembrane helix</keyword>
<keyword id="KW-0813">Transport</keyword>
<gene>
    <name type="primary">BT1</name>
</gene>
<evidence type="ECO:0000255" key="1"/>
<evidence type="ECO:0000256" key="2">
    <source>
        <dbReference type="SAM" id="MobiDB-lite"/>
    </source>
</evidence>
<evidence type="ECO:0000269" key="3">
    <source>
    </source>
</evidence>
<evidence type="ECO:0000269" key="4">
    <source>
    </source>
</evidence>
<evidence type="ECO:0000269" key="5">
    <source>
    </source>
</evidence>
<evidence type="ECO:0000269" key="6">
    <source>
    </source>
</evidence>
<evidence type="ECO:0000305" key="7"/>
<evidence type="ECO:0000305" key="8">
    <source>
    </source>
</evidence>
<organism>
    <name type="scientific">Zea mays</name>
    <name type="common">Maize</name>
    <dbReference type="NCBI Taxonomy" id="4577"/>
    <lineage>
        <taxon>Eukaryota</taxon>
        <taxon>Viridiplantae</taxon>
        <taxon>Streptophyta</taxon>
        <taxon>Embryophyta</taxon>
        <taxon>Tracheophyta</taxon>
        <taxon>Spermatophyta</taxon>
        <taxon>Magnoliopsida</taxon>
        <taxon>Liliopsida</taxon>
        <taxon>Poales</taxon>
        <taxon>Poaceae</taxon>
        <taxon>PACMAD clade</taxon>
        <taxon>Panicoideae</taxon>
        <taxon>Andropogonodae</taxon>
        <taxon>Andropogoneae</taxon>
        <taxon>Tripsacinae</taxon>
        <taxon>Zea</taxon>
    </lineage>
</organism>
<dbReference type="EMBL" id="M79333">
    <property type="protein sequence ID" value="AAA33438.1"/>
    <property type="molecule type" value="mRNA"/>
</dbReference>
<dbReference type="PIR" id="JQ1459">
    <property type="entry name" value="JQ1459"/>
</dbReference>
<dbReference type="SMR" id="P29518"/>
<dbReference type="STRING" id="4577.P29518"/>
<dbReference type="TCDB" id="2.A.29.11.1">
    <property type="family name" value="the mitochondrial carrier (mc) family"/>
</dbReference>
<dbReference type="PaxDb" id="4577-GRMZM2G144081_P01"/>
<dbReference type="MaizeGDB" id="47578"/>
<dbReference type="InParanoid" id="P29518"/>
<dbReference type="SABIO-RK" id="P29518"/>
<dbReference type="Proteomes" id="UP000007305">
    <property type="component" value="Unplaced"/>
</dbReference>
<dbReference type="ExpressionAtlas" id="P29518">
    <property type="expression patterns" value="baseline and differential"/>
</dbReference>
<dbReference type="GO" id="GO:0033098">
    <property type="term" value="C:amyloplast inner membrane"/>
    <property type="evidence" value="ECO:0007669"/>
    <property type="project" value="UniProtKB-SubCell"/>
</dbReference>
<dbReference type="GO" id="GO:0009706">
    <property type="term" value="C:chloroplast inner membrane"/>
    <property type="evidence" value="ECO:0007669"/>
    <property type="project" value="UniProtKB-SubCell"/>
</dbReference>
<dbReference type="GO" id="GO:0005743">
    <property type="term" value="C:mitochondrial inner membrane"/>
    <property type="evidence" value="ECO:0007669"/>
    <property type="project" value="UniProtKB-SubCell"/>
</dbReference>
<dbReference type="GO" id="GO:0015866">
    <property type="term" value="P:ADP transport"/>
    <property type="evidence" value="ECO:0000314"/>
    <property type="project" value="CACAO"/>
</dbReference>
<dbReference type="GO" id="GO:0090480">
    <property type="term" value="P:purine nucleotide-sugar transmembrane transport"/>
    <property type="evidence" value="ECO:0000314"/>
    <property type="project" value="CACAO"/>
</dbReference>
<dbReference type="FunFam" id="1.50.40.10:FF:000150">
    <property type="entry name" value="Adenine nucleotide transporter BT1, chloroplastic/mitochondrial"/>
    <property type="match status" value="1"/>
</dbReference>
<dbReference type="Gene3D" id="1.50.40.10">
    <property type="entry name" value="Mitochondrial carrier domain"/>
    <property type="match status" value="1"/>
</dbReference>
<dbReference type="InterPro" id="IPR002067">
    <property type="entry name" value="Mit_carrier"/>
</dbReference>
<dbReference type="InterPro" id="IPR018108">
    <property type="entry name" value="Mitochondrial_sb/sol_carrier"/>
</dbReference>
<dbReference type="InterPro" id="IPR023395">
    <property type="entry name" value="Mt_carrier_dom_sf"/>
</dbReference>
<dbReference type="PANTHER" id="PTHR24089">
    <property type="entry name" value="SOLUTE CARRIER FAMILY 25"/>
    <property type="match status" value="1"/>
</dbReference>
<dbReference type="Pfam" id="PF00153">
    <property type="entry name" value="Mito_carr"/>
    <property type="match status" value="3"/>
</dbReference>
<dbReference type="PRINTS" id="PR00926">
    <property type="entry name" value="MITOCARRIER"/>
</dbReference>
<dbReference type="SUPFAM" id="SSF103506">
    <property type="entry name" value="Mitochondrial carrier"/>
    <property type="match status" value="1"/>
</dbReference>
<dbReference type="PROSITE" id="PS50920">
    <property type="entry name" value="SOLCAR"/>
    <property type="match status" value="3"/>
</dbReference>